<gene>
    <name evidence="1" type="primary">recA</name>
    <name type="ordered locus">SAR1261</name>
</gene>
<keyword id="KW-0067">ATP-binding</keyword>
<keyword id="KW-0963">Cytoplasm</keyword>
<keyword id="KW-0227">DNA damage</keyword>
<keyword id="KW-0233">DNA recombination</keyword>
<keyword id="KW-0234">DNA repair</keyword>
<keyword id="KW-0238">DNA-binding</keyword>
<keyword id="KW-0547">Nucleotide-binding</keyword>
<keyword id="KW-0742">SOS response</keyword>
<dbReference type="EMBL" id="BX571856">
    <property type="protein sequence ID" value="CAG40263.1"/>
    <property type="molecule type" value="Genomic_DNA"/>
</dbReference>
<dbReference type="RefSeq" id="WP_000368166.1">
    <property type="nucleotide sequence ID" value="NC_002952.2"/>
</dbReference>
<dbReference type="SMR" id="Q6GHF0"/>
<dbReference type="KEGG" id="sar:SAR1261"/>
<dbReference type="HOGENOM" id="CLU_040469_1_2_9"/>
<dbReference type="Proteomes" id="UP000000596">
    <property type="component" value="Chromosome"/>
</dbReference>
<dbReference type="GO" id="GO:0005829">
    <property type="term" value="C:cytosol"/>
    <property type="evidence" value="ECO:0007669"/>
    <property type="project" value="TreeGrafter"/>
</dbReference>
<dbReference type="GO" id="GO:0005524">
    <property type="term" value="F:ATP binding"/>
    <property type="evidence" value="ECO:0007669"/>
    <property type="project" value="UniProtKB-UniRule"/>
</dbReference>
<dbReference type="GO" id="GO:0016887">
    <property type="term" value="F:ATP hydrolysis activity"/>
    <property type="evidence" value="ECO:0007669"/>
    <property type="project" value="InterPro"/>
</dbReference>
<dbReference type="GO" id="GO:0140664">
    <property type="term" value="F:ATP-dependent DNA damage sensor activity"/>
    <property type="evidence" value="ECO:0007669"/>
    <property type="project" value="InterPro"/>
</dbReference>
<dbReference type="GO" id="GO:0003684">
    <property type="term" value="F:damaged DNA binding"/>
    <property type="evidence" value="ECO:0007669"/>
    <property type="project" value="UniProtKB-UniRule"/>
</dbReference>
<dbReference type="GO" id="GO:0003697">
    <property type="term" value="F:single-stranded DNA binding"/>
    <property type="evidence" value="ECO:0007669"/>
    <property type="project" value="UniProtKB-UniRule"/>
</dbReference>
<dbReference type="GO" id="GO:0006310">
    <property type="term" value="P:DNA recombination"/>
    <property type="evidence" value="ECO:0007669"/>
    <property type="project" value="UniProtKB-UniRule"/>
</dbReference>
<dbReference type="GO" id="GO:0006281">
    <property type="term" value="P:DNA repair"/>
    <property type="evidence" value="ECO:0007669"/>
    <property type="project" value="UniProtKB-UniRule"/>
</dbReference>
<dbReference type="GO" id="GO:0009432">
    <property type="term" value="P:SOS response"/>
    <property type="evidence" value="ECO:0007669"/>
    <property type="project" value="UniProtKB-UniRule"/>
</dbReference>
<dbReference type="CDD" id="cd00983">
    <property type="entry name" value="RecA"/>
    <property type="match status" value="1"/>
</dbReference>
<dbReference type="FunFam" id="3.40.50.300:FF:000087">
    <property type="entry name" value="Recombinase RecA"/>
    <property type="match status" value="1"/>
</dbReference>
<dbReference type="Gene3D" id="3.40.50.300">
    <property type="entry name" value="P-loop containing nucleotide triphosphate hydrolases"/>
    <property type="match status" value="1"/>
</dbReference>
<dbReference type="HAMAP" id="MF_00268">
    <property type="entry name" value="RecA"/>
    <property type="match status" value="1"/>
</dbReference>
<dbReference type="InterPro" id="IPR003593">
    <property type="entry name" value="AAA+_ATPase"/>
</dbReference>
<dbReference type="InterPro" id="IPR013765">
    <property type="entry name" value="DNA_recomb/repair_RecA"/>
</dbReference>
<dbReference type="InterPro" id="IPR020584">
    <property type="entry name" value="DNA_recomb/repair_RecA_CS"/>
</dbReference>
<dbReference type="InterPro" id="IPR027417">
    <property type="entry name" value="P-loop_NTPase"/>
</dbReference>
<dbReference type="InterPro" id="IPR049261">
    <property type="entry name" value="RecA-like_C"/>
</dbReference>
<dbReference type="InterPro" id="IPR049428">
    <property type="entry name" value="RecA-like_N"/>
</dbReference>
<dbReference type="InterPro" id="IPR020588">
    <property type="entry name" value="RecA_ATP-bd"/>
</dbReference>
<dbReference type="InterPro" id="IPR023400">
    <property type="entry name" value="RecA_C_sf"/>
</dbReference>
<dbReference type="InterPro" id="IPR020587">
    <property type="entry name" value="RecA_monomer-monomer_interface"/>
</dbReference>
<dbReference type="NCBIfam" id="TIGR02012">
    <property type="entry name" value="tigrfam_recA"/>
    <property type="match status" value="1"/>
</dbReference>
<dbReference type="PANTHER" id="PTHR45900:SF1">
    <property type="entry name" value="MITOCHONDRIAL DNA REPAIR PROTEIN RECA HOMOLOG-RELATED"/>
    <property type="match status" value="1"/>
</dbReference>
<dbReference type="PANTHER" id="PTHR45900">
    <property type="entry name" value="RECA"/>
    <property type="match status" value="1"/>
</dbReference>
<dbReference type="Pfam" id="PF00154">
    <property type="entry name" value="RecA"/>
    <property type="match status" value="1"/>
</dbReference>
<dbReference type="Pfam" id="PF21096">
    <property type="entry name" value="RecA_C"/>
    <property type="match status" value="1"/>
</dbReference>
<dbReference type="PRINTS" id="PR00142">
    <property type="entry name" value="RECA"/>
</dbReference>
<dbReference type="SMART" id="SM00382">
    <property type="entry name" value="AAA"/>
    <property type="match status" value="1"/>
</dbReference>
<dbReference type="SUPFAM" id="SSF52540">
    <property type="entry name" value="P-loop containing nucleoside triphosphate hydrolases"/>
    <property type="match status" value="1"/>
</dbReference>
<dbReference type="SUPFAM" id="SSF54752">
    <property type="entry name" value="RecA protein, C-terminal domain"/>
    <property type="match status" value="1"/>
</dbReference>
<dbReference type="PROSITE" id="PS00321">
    <property type="entry name" value="RECA_1"/>
    <property type="match status" value="1"/>
</dbReference>
<dbReference type="PROSITE" id="PS50162">
    <property type="entry name" value="RECA_2"/>
    <property type="match status" value="1"/>
</dbReference>
<dbReference type="PROSITE" id="PS50163">
    <property type="entry name" value="RECA_3"/>
    <property type="match status" value="1"/>
</dbReference>
<name>RECA_STAAR</name>
<organism>
    <name type="scientific">Staphylococcus aureus (strain MRSA252)</name>
    <dbReference type="NCBI Taxonomy" id="282458"/>
    <lineage>
        <taxon>Bacteria</taxon>
        <taxon>Bacillati</taxon>
        <taxon>Bacillota</taxon>
        <taxon>Bacilli</taxon>
        <taxon>Bacillales</taxon>
        <taxon>Staphylococcaceae</taxon>
        <taxon>Staphylococcus</taxon>
    </lineage>
</organism>
<feature type="chain" id="PRO_0000122841" description="Protein RecA">
    <location>
        <begin position="1"/>
        <end position="347"/>
    </location>
</feature>
<feature type="region of interest" description="Disordered" evidence="2">
    <location>
        <begin position="325"/>
        <end position="347"/>
    </location>
</feature>
<feature type="compositionally biased region" description="Basic and acidic residues" evidence="2">
    <location>
        <begin position="338"/>
        <end position="347"/>
    </location>
</feature>
<feature type="binding site" evidence="1">
    <location>
        <begin position="65"/>
        <end position="72"/>
    </location>
    <ligand>
        <name>ATP</name>
        <dbReference type="ChEBI" id="CHEBI:30616"/>
    </ligand>
</feature>
<reference key="1">
    <citation type="journal article" date="2004" name="Proc. Natl. Acad. Sci. U.S.A.">
        <title>Complete genomes of two clinical Staphylococcus aureus strains: evidence for the rapid evolution of virulence and drug resistance.</title>
        <authorList>
            <person name="Holden M.T.G."/>
            <person name="Feil E.J."/>
            <person name="Lindsay J.A."/>
            <person name="Peacock S.J."/>
            <person name="Day N.P.J."/>
            <person name="Enright M.C."/>
            <person name="Foster T.J."/>
            <person name="Moore C.E."/>
            <person name="Hurst L."/>
            <person name="Atkin R."/>
            <person name="Barron A."/>
            <person name="Bason N."/>
            <person name="Bentley S.D."/>
            <person name="Chillingworth C."/>
            <person name="Chillingworth T."/>
            <person name="Churcher C."/>
            <person name="Clark L."/>
            <person name="Corton C."/>
            <person name="Cronin A."/>
            <person name="Doggett J."/>
            <person name="Dowd L."/>
            <person name="Feltwell T."/>
            <person name="Hance Z."/>
            <person name="Harris B."/>
            <person name="Hauser H."/>
            <person name="Holroyd S."/>
            <person name="Jagels K."/>
            <person name="James K.D."/>
            <person name="Lennard N."/>
            <person name="Line A."/>
            <person name="Mayes R."/>
            <person name="Moule S."/>
            <person name="Mungall K."/>
            <person name="Ormond D."/>
            <person name="Quail M.A."/>
            <person name="Rabbinowitsch E."/>
            <person name="Rutherford K.M."/>
            <person name="Sanders M."/>
            <person name="Sharp S."/>
            <person name="Simmonds M."/>
            <person name="Stevens K."/>
            <person name="Whitehead S."/>
            <person name="Barrell B.G."/>
            <person name="Spratt B.G."/>
            <person name="Parkhill J."/>
        </authorList>
    </citation>
    <scope>NUCLEOTIDE SEQUENCE [LARGE SCALE GENOMIC DNA]</scope>
    <source>
        <strain>MRSA252</strain>
    </source>
</reference>
<comment type="function">
    <text evidence="1">Can catalyze the hydrolysis of ATP in the presence of single-stranded DNA, the ATP-dependent uptake of single-stranded DNA by duplex DNA, and the ATP-dependent hybridization of homologous single-stranded DNAs. It interacts with LexA causing its activation and leading to its autocatalytic cleavage.</text>
</comment>
<comment type="subcellular location">
    <subcellularLocation>
        <location evidence="1">Cytoplasm</location>
    </subcellularLocation>
</comment>
<comment type="similarity">
    <text evidence="1">Belongs to the RecA family.</text>
</comment>
<evidence type="ECO:0000255" key="1">
    <source>
        <dbReference type="HAMAP-Rule" id="MF_00268"/>
    </source>
</evidence>
<evidence type="ECO:0000256" key="2">
    <source>
        <dbReference type="SAM" id="MobiDB-lite"/>
    </source>
</evidence>
<accession>Q6GHF0</accession>
<proteinExistence type="inferred from homology"/>
<sequence length="347" mass="37657">MDNDRQKALDTVIKNMEKSFGKGAVMKLGDNIGRRVSTTSTGSVTLDNALGVGGYPKGRIIEIYGPESSGKTTVALHAIAEVQSNGGVAAFIDAEHALDPEYAQALGVDIDNLYLSQPDHGEQGLEIAEAFVRSGAVDIVVVDSVAALTPKAEIEGEMGDTHVGLQARLMSQALRKLSGAISKSNTTAIFINQIREKVGVMFGNPETTPGGRALKFYSSVRLEVRRAEQLKQGQEIVGNRTKIKVVKNKVAPPFRVAEVDIMYGQGISKEGELIDLGVENDIVDKSGAWYSYNGERMGQGKENVKMYLKENPQIKEEIDRKLREKLGISDGDVEETEDAPKSLFDEE</sequence>
<protein>
    <recommendedName>
        <fullName evidence="1">Protein RecA</fullName>
    </recommendedName>
    <alternativeName>
        <fullName evidence="1">Recombinase A</fullName>
    </alternativeName>
</protein>